<feature type="chain" id="PRO_1000031243" description="Ribonuclease HIII">
    <location>
        <begin position="1"/>
        <end position="300"/>
    </location>
</feature>
<feature type="domain" description="RNase H type-2" evidence="2">
    <location>
        <begin position="83"/>
        <end position="300"/>
    </location>
</feature>
<feature type="binding site" evidence="1">
    <location>
        <position position="89"/>
    </location>
    <ligand>
        <name>a divalent metal cation</name>
        <dbReference type="ChEBI" id="CHEBI:60240"/>
    </ligand>
</feature>
<feature type="binding site" evidence="1">
    <location>
        <position position="90"/>
    </location>
    <ligand>
        <name>a divalent metal cation</name>
        <dbReference type="ChEBI" id="CHEBI:60240"/>
    </ligand>
</feature>
<feature type="binding site" evidence="1">
    <location>
        <position position="194"/>
    </location>
    <ligand>
        <name>a divalent metal cation</name>
        <dbReference type="ChEBI" id="CHEBI:60240"/>
    </ligand>
</feature>
<accession>Q1JA20</accession>
<proteinExistence type="inferred from homology"/>
<evidence type="ECO:0000255" key="1">
    <source>
        <dbReference type="HAMAP-Rule" id="MF_00053"/>
    </source>
</evidence>
<evidence type="ECO:0000255" key="2">
    <source>
        <dbReference type="PROSITE-ProRule" id="PRU01319"/>
    </source>
</evidence>
<gene>
    <name evidence="1" type="primary">rnhC</name>
    <name type="ordered locus">MGAS2096_Spy1589</name>
</gene>
<reference key="1">
    <citation type="journal article" date="2006" name="Proc. Natl. Acad. Sci. U.S.A.">
        <title>Molecular genetic anatomy of inter- and intraserotype variation in the human bacterial pathogen group A Streptococcus.</title>
        <authorList>
            <person name="Beres S.B."/>
            <person name="Richter E.W."/>
            <person name="Nagiec M.J."/>
            <person name="Sumby P."/>
            <person name="Porcella S.F."/>
            <person name="DeLeo F.R."/>
            <person name="Musser J.M."/>
        </authorList>
    </citation>
    <scope>NUCLEOTIDE SEQUENCE [LARGE SCALE GENOMIC DNA]</scope>
    <source>
        <strain>MGAS2096</strain>
    </source>
</reference>
<dbReference type="EC" id="3.1.26.4" evidence="1"/>
<dbReference type="EMBL" id="CP000261">
    <property type="protein sequence ID" value="ABF36641.1"/>
    <property type="molecule type" value="Genomic_DNA"/>
</dbReference>
<dbReference type="SMR" id="Q1JA20"/>
<dbReference type="KEGG" id="spj:MGAS2096_Spy1589"/>
<dbReference type="HOGENOM" id="CLU_059546_1_0_9"/>
<dbReference type="GO" id="GO:0005737">
    <property type="term" value="C:cytoplasm"/>
    <property type="evidence" value="ECO:0007669"/>
    <property type="project" value="UniProtKB-SubCell"/>
</dbReference>
<dbReference type="GO" id="GO:0032299">
    <property type="term" value="C:ribonuclease H2 complex"/>
    <property type="evidence" value="ECO:0007669"/>
    <property type="project" value="TreeGrafter"/>
</dbReference>
<dbReference type="GO" id="GO:0000287">
    <property type="term" value="F:magnesium ion binding"/>
    <property type="evidence" value="ECO:0007669"/>
    <property type="project" value="UniProtKB-UniRule"/>
</dbReference>
<dbReference type="GO" id="GO:0003723">
    <property type="term" value="F:RNA binding"/>
    <property type="evidence" value="ECO:0007669"/>
    <property type="project" value="InterPro"/>
</dbReference>
<dbReference type="GO" id="GO:0004523">
    <property type="term" value="F:RNA-DNA hybrid ribonuclease activity"/>
    <property type="evidence" value="ECO:0007669"/>
    <property type="project" value="UniProtKB-UniRule"/>
</dbReference>
<dbReference type="GO" id="GO:0043137">
    <property type="term" value="P:DNA replication, removal of RNA primer"/>
    <property type="evidence" value="ECO:0007669"/>
    <property type="project" value="TreeGrafter"/>
</dbReference>
<dbReference type="GO" id="GO:0006298">
    <property type="term" value="P:mismatch repair"/>
    <property type="evidence" value="ECO:0007669"/>
    <property type="project" value="TreeGrafter"/>
</dbReference>
<dbReference type="CDD" id="cd06590">
    <property type="entry name" value="RNase_HII_bacteria_HIII_like"/>
    <property type="match status" value="1"/>
</dbReference>
<dbReference type="CDD" id="cd14796">
    <property type="entry name" value="RNAse_HIII_N"/>
    <property type="match status" value="1"/>
</dbReference>
<dbReference type="FunFam" id="3.30.420.10:FF:000047">
    <property type="entry name" value="Ribonuclease HIII"/>
    <property type="match status" value="1"/>
</dbReference>
<dbReference type="Gene3D" id="3.30.420.10">
    <property type="entry name" value="Ribonuclease H-like superfamily/Ribonuclease H"/>
    <property type="match status" value="1"/>
</dbReference>
<dbReference type="Gene3D" id="3.30.310.10">
    <property type="entry name" value="TATA-Binding Protein"/>
    <property type="match status" value="1"/>
</dbReference>
<dbReference type="HAMAP" id="MF_00053">
    <property type="entry name" value="RNase_HIII"/>
    <property type="match status" value="1"/>
</dbReference>
<dbReference type="InterPro" id="IPR001352">
    <property type="entry name" value="RNase_HII/HIII"/>
</dbReference>
<dbReference type="InterPro" id="IPR024567">
    <property type="entry name" value="RNase_HII/HIII_dom"/>
</dbReference>
<dbReference type="InterPro" id="IPR004641">
    <property type="entry name" value="RNase_HIII"/>
</dbReference>
<dbReference type="InterPro" id="IPR024568">
    <property type="entry name" value="RNase_HIII_N"/>
</dbReference>
<dbReference type="InterPro" id="IPR012337">
    <property type="entry name" value="RNaseH-like_sf"/>
</dbReference>
<dbReference type="InterPro" id="IPR036397">
    <property type="entry name" value="RNaseH_sf"/>
</dbReference>
<dbReference type="InterPro" id="IPR012295">
    <property type="entry name" value="TBP_dom_sf"/>
</dbReference>
<dbReference type="NCBIfam" id="TIGR00716">
    <property type="entry name" value="rnhC"/>
    <property type="match status" value="1"/>
</dbReference>
<dbReference type="PANTHER" id="PTHR10954:SF23">
    <property type="entry name" value="RIBONUCLEASE"/>
    <property type="match status" value="1"/>
</dbReference>
<dbReference type="PANTHER" id="PTHR10954">
    <property type="entry name" value="RIBONUCLEASE H2 SUBUNIT A"/>
    <property type="match status" value="1"/>
</dbReference>
<dbReference type="Pfam" id="PF11858">
    <property type="entry name" value="DUF3378"/>
    <property type="match status" value="1"/>
</dbReference>
<dbReference type="Pfam" id="PF01351">
    <property type="entry name" value="RNase_HII"/>
    <property type="match status" value="1"/>
</dbReference>
<dbReference type="PIRSF" id="PIRSF037748">
    <property type="entry name" value="RnhC"/>
    <property type="match status" value="1"/>
</dbReference>
<dbReference type="SUPFAM" id="SSF53098">
    <property type="entry name" value="Ribonuclease H-like"/>
    <property type="match status" value="1"/>
</dbReference>
<dbReference type="PROSITE" id="PS51975">
    <property type="entry name" value="RNASE_H_2"/>
    <property type="match status" value="1"/>
</dbReference>
<keyword id="KW-0963">Cytoplasm</keyword>
<keyword id="KW-0255">Endonuclease</keyword>
<keyword id="KW-0378">Hydrolase</keyword>
<keyword id="KW-0460">Magnesium</keyword>
<keyword id="KW-0479">Metal-binding</keyword>
<keyword id="KW-0540">Nuclease</keyword>
<comment type="function">
    <text evidence="1">Endonuclease that specifically degrades the RNA of RNA-DNA hybrids.</text>
</comment>
<comment type="catalytic activity">
    <reaction evidence="1">
        <text>Endonucleolytic cleavage to 5'-phosphomonoester.</text>
        <dbReference type="EC" id="3.1.26.4"/>
    </reaction>
</comment>
<comment type="cofactor">
    <cofactor evidence="1">
        <name>Mn(2+)</name>
        <dbReference type="ChEBI" id="CHEBI:29035"/>
    </cofactor>
    <cofactor evidence="1">
        <name>Mg(2+)</name>
        <dbReference type="ChEBI" id="CHEBI:18420"/>
    </cofactor>
    <text evidence="1">Manganese or magnesium. Binds 1 divalent metal ion per monomer in the absence of substrate. May bind a second metal ion after substrate binding.</text>
</comment>
<comment type="subcellular location">
    <subcellularLocation>
        <location evidence="1">Cytoplasm</location>
    </subcellularLocation>
</comment>
<comment type="similarity">
    <text evidence="1">Belongs to the RNase HII family. RnhC subfamily.</text>
</comment>
<name>RNH3_STRPB</name>
<protein>
    <recommendedName>
        <fullName evidence="1">Ribonuclease HIII</fullName>
        <shortName evidence="1">RNase HIII</shortName>
        <ecNumber evidence="1">3.1.26.4</ecNumber>
    </recommendedName>
</protein>
<organism>
    <name type="scientific">Streptococcus pyogenes serotype M12 (strain MGAS2096)</name>
    <dbReference type="NCBI Taxonomy" id="370553"/>
    <lineage>
        <taxon>Bacteria</taxon>
        <taxon>Bacillati</taxon>
        <taxon>Bacillota</taxon>
        <taxon>Bacilli</taxon>
        <taxon>Lactobacillales</taxon>
        <taxon>Streptococcaceae</taxon>
        <taxon>Streptococcus</taxon>
    </lineage>
</organism>
<sequence>MNTLVLKIDAILSKHLKKQLASYTISSQNTYVAFAAKKNGVTVLLYKSGKLVLQGNGANALAQELNLPVAKTVFEASNNSQDIPIIGSDEVGNGSYFGGIAVVASFVDPKDHSFLKKLGVDDSKKLSDKTIQQIAPLLEKQIPHQSLLLSPKKYNELVGKSKPYNAISIKVALHNQAIFLLLQKGIQPKQIVIDAFTSQSNYEKHLKKEKNHFPNPLTFQEKAESHYLAVAVSSIIARNLFLDNLDQLGQDLGYQLPSGAGSASDKVASQLLAAYGMSSLEYSAKLHFANTHKAQALLTK</sequence>